<proteinExistence type="inferred from homology"/>
<organism>
    <name type="scientific">Methanococcus maripaludis (strain DSM 14266 / JCM 13030 / NBRC 101832 / S2 / LL)</name>
    <dbReference type="NCBI Taxonomy" id="267377"/>
    <lineage>
        <taxon>Archaea</taxon>
        <taxon>Methanobacteriati</taxon>
        <taxon>Methanobacteriota</taxon>
        <taxon>Methanomada group</taxon>
        <taxon>Methanococci</taxon>
        <taxon>Methanococcales</taxon>
        <taxon>Methanococcaceae</taxon>
        <taxon>Methanococcus</taxon>
    </lineage>
</organism>
<comment type="sequence caution" evidence="2">
    <conflict type="erroneous initiation">
        <sequence resource="EMBL-CDS" id="CAF30234"/>
    </conflict>
</comment>
<protein>
    <recommendedName>
        <fullName evidence="1">Putative HTH-type transcriptional regulatory protein MMP0678</fullName>
    </recommendedName>
</protein>
<sequence>MREVLLSECIDLLYESHFVISKPFGRSCFDLIAKKGNLRLLIKILKNIDSLSTEQSEELLNISKMLQAVPVIIGTRTRNSVMEEGAVYERYGIKAVTFNTFREQLVGEPPVVYANRGGFFVNIDGKVLRETREKLKISVGELAEVSRVSRKTIYKYEQNEANPSAEVAIKIEEYLDVPLIKGINIMDCIDGLKSQKSRDDAFEKILKEGEDFKIRVIDILGDMGFNLLETTKAPFDAVAEESKGEDAENQNIIFTNIQETENEEIRRKAMIVDEISKILNSHSLLVLEKKTNENKRITSMSISELEKIGDTVDLLDFIEKRKKSTK</sequence>
<evidence type="ECO:0000255" key="1">
    <source>
        <dbReference type="HAMAP-Rule" id="MF_00584"/>
    </source>
</evidence>
<evidence type="ECO:0000305" key="2"/>
<keyword id="KW-0238">DNA-binding</keyword>
<keyword id="KW-1185">Reference proteome</keyword>
<keyword id="KW-0804">Transcription</keyword>
<keyword id="KW-0805">Transcription regulation</keyword>
<reference key="1">
    <citation type="journal article" date="2004" name="J. Bacteriol.">
        <title>Complete genome sequence of the genetically tractable hydrogenotrophic methanogen Methanococcus maripaludis.</title>
        <authorList>
            <person name="Hendrickson E.L."/>
            <person name="Kaul R."/>
            <person name="Zhou Y."/>
            <person name="Bovee D."/>
            <person name="Chapman P."/>
            <person name="Chung J."/>
            <person name="Conway de Macario E."/>
            <person name="Dodsworth J.A."/>
            <person name="Gillett W."/>
            <person name="Graham D.E."/>
            <person name="Hackett M."/>
            <person name="Haydock A.K."/>
            <person name="Kang A."/>
            <person name="Land M.L."/>
            <person name="Levy R."/>
            <person name="Lie T.J."/>
            <person name="Major T.A."/>
            <person name="Moore B.C."/>
            <person name="Porat I."/>
            <person name="Palmeiri A."/>
            <person name="Rouse G."/>
            <person name="Saenphimmachak C."/>
            <person name="Soell D."/>
            <person name="Van Dien S."/>
            <person name="Wang T."/>
            <person name="Whitman W.B."/>
            <person name="Xia Q."/>
            <person name="Zhang Y."/>
            <person name="Larimer F.W."/>
            <person name="Olson M.V."/>
            <person name="Leigh J.A."/>
        </authorList>
    </citation>
    <scope>NUCLEOTIDE SEQUENCE [LARGE SCALE GENOMIC DNA]</scope>
    <source>
        <strain>DSM 14266 / JCM 13030 / NBRC 101832 / S2 / LL</strain>
    </source>
</reference>
<name>Y678_METMP</name>
<dbReference type="EMBL" id="BX950229">
    <property type="protein sequence ID" value="CAF30234.1"/>
    <property type="status" value="ALT_INIT"/>
    <property type="molecule type" value="Genomic_DNA"/>
</dbReference>
<dbReference type="RefSeq" id="WP_048064067.1">
    <property type="nucleotide sequence ID" value="NC_005791.1"/>
</dbReference>
<dbReference type="SMR" id="Q6LZF1"/>
<dbReference type="STRING" id="267377.MMP0678"/>
<dbReference type="EnsemblBacteria" id="CAF30234">
    <property type="protein sequence ID" value="CAF30234"/>
    <property type="gene ID" value="MMP0678"/>
</dbReference>
<dbReference type="GeneID" id="2762747"/>
<dbReference type="KEGG" id="mmp:MMP0678"/>
<dbReference type="PATRIC" id="fig|267377.15.peg.695"/>
<dbReference type="eggNOG" id="arCOG04152">
    <property type="taxonomic scope" value="Archaea"/>
</dbReference>
<dbReference type="HOGENOM" id="CLU_075726_0_0_2"/>
<dbReference type="OrthoDB" id="31424at2157"/>
<dbReference type="Proteomes" id="UP000000590">
    <property type="component" value="Chromosome"/>
</dbReference>
<dbReference type="GO" id="GO:0003677">
    <property type="term" value="F:DNA binding"/>
    <property type="evidence" value="ECO:0007669"/>
    <property type="project" value="UniProtKB-KW"/>
</dbReference>
<dbReference type="GO" id="GO:0003700">
    <property type="term" value="F:DNA-binding transcription factor activity"/>
    <property type="evidence" value="ECO:0007669"/>
    <property type="project" value="UniProtKB-UniRule"/>
</dbReference>
<dbReference type="CDD" id="cd00093">
    <property type="entry name" value="HTH_XRE"/>
    <property type="match status" value="1"/>
</dbReference>
<dbReference type="Gene3D" id="1.10.260.40">
    <property type="entry name" value="lambda repressor-like DNA-binding domains"/>
    <property type="match status" value="1"/>
</dbReference>
<dbReference type="HAMAP" id="MF_00584">
    <property type="entry name" value="HTH_type_cro_C1"/>
    <property type="match status" value="1"/>
</dbReference>
<dbReference type="InterPro" id="IPR020886">
    <property type="entry name" value="Arc_TR_HTH"/>
</dbReference>
<dbReference type="InterPro" id="IPR001387">
    <property type="entry name" value="Cro/C1-type_HTH"/>
</dbReference>
<dbReference type="InterPro" id="IPR010982">
    <property type="entry name" value="Lambda_DNA-bd_dom_sf"/>
</dbReference>
<dbReference type="NCBIfam" id="NF003162">
    <property type="entry name" value="PRK04140.1"/>
    <property type="match status" value="1"/>
</dbReference>
<dbReference type="Pfam" id="PF01381">
    <property type="entry name" value="HTH_3"/>
    <property type="match status" value="1"/>
</dbReference>
<dbReference type="SMART" id="SM00530">
    <property type="entry name" value="HTH_XRE"/>
    <property type="match status" value="1"/>
</dbReference>
<dbReference type="SUPFAM" id="SSF47413">
    <property type="entry name" value="lambda repressor-like DNA-binding domains"/>
    <property type="match status" value="1"/>
</dbReference>
<dbReference type="PROSITE" id="PS50943">
    <property type="entry name" value="HTH_CROC1"/>
    <property type="match status" value="1"/>
</dbReference>
<accession>Q6LZF1</accession>
<feature type="chain" id="PRO_0000259358" description="Putative HTH-type transcriptional regulatory protein MMP0678">
    <location>
        <begin position="1"/>
        <end position="326"/>
    </location>
</feature>
<feature type="domain" description="HTH cro/C1-type" evidence="1">
    <location>
        <begin position="128"/>
        <end position="183"/>
    </location>
</feature>
<feature type="DNA-binding region" description="H-T-H motif" evidence="1">
    <location>
        <begin position="139"/>
        <end position="158"/>
    </location>
</feature>
<gene>
    <name type="ordered locus">MMP0678</name>
</gene>